<comment type="subcellular location">
    <subcellularLocation>
        <location evidence="2">Endoplasmic reticulum</location>
    </subcellularLocation>
</comment>
<comment type="similarity">
    <text evidence="4">Belongs to the OSBP family.</text>
</comment>
<gene>
    <name type="primary">obp1</name>
    <name type="ORF">SPBC646.08c</name>
</gene>
<evidence type="ECO:0000256" key="1">
    <source>
        <dbReference type="SAM" id="MobiDB-lite"/>
    </source>
</evidence>
<evidence type="ECO:0000269" key="2">
    <source>
    </source>
</evidence>
<evidence type="ECO:0000269" key="3">
    <source>
    </source>
</evidence>
<evidence type="ECO:0000305" key="4"/>
<name>OBP1_SCHPO</name>
<organism>
    <name type="scientific">Schizosaccharomyces pombe (strain 972 / ATCC 24843)</name>
    <name type="common">Fission yeast</name>
    <dbReference type="NCBI Taxonomy" id="284812"/>
    <lineage>
        <taxon>Eukaryota</taxon>
        <taxon>Fungi</taxon>
        <taxon>Dikarya</taxon>
        <taxon>Ascomycota</taxon>
        <taxon>Taphrinomycotina</taxon>
        <taxon>Schizosaccharomycetes</taxon>
        <taxon>Schizosaccharomycetales</taxon>
        <taxon>Schizosaccharomycetaceae</taxon>
        <taxon>Schizosaccharomyces</taxon>
    </lineage>
</organism>
<accession>O94512</accession>
<proteinExistence type="evidence at protein level"/>
<dbReference type="EMBL" id="CU329671">
    <property type="protein sequence ID" value="CAA22812.1"/>
    <property type="molecule type" value="Genomic_DNA"/>
</dbReference>
<dbReference type="PIR" id="T40584">
    <property type="entry name" value="T40584"/>
</dbReference>
<dbReference type="SMR" id="O94512"/>
<dbReference type="BioGRID" id="277608">
    <property type="interactions" value="24"/>
</dbReference>
<dbReference type="FunCoup" id="O94512">
    <property type="interactions" value="18"/>
</dbReference>
<dbReference type="STRING" id="284812.O94512"/>
<dbReference type="iPTMnet" id="O94512"/>
<dbReference type="PaxDb" id="4896-SPBC646.08c.1"/>
<dbReference type="EnsemblFungi" id="SPBC646.08c.1">
    <property type="protein sequence ID" value="SPBC646.08c.1:pep"/>
    <property type="gene ID" value="SPBC646.08c"/>
</dbReference>
<dbReference type="KEGG" id="spo:2541093"/>
<dbReference type="PomBase" id="SPBC646.08c"/>
<dbReference type="VEuPathDB" id="FungiDB:SPBC646.08c"/>
<dbReference type="eggNOG" id="KOG2210">
    <property type="taxonomic scope" value="Eukaryota"/>
</dbReference>
<dbReference type="HOGENOM" id="CLU_029722_0_0_1"/>
<dbReference type="InParanoid" id="O94512"/>
<dbReference type="OMA" id="WNYLDAP"/>
<dbReference type="PhylomeDB" id="O94512"/>
<dbReference type="Reactome" id="R-SPO-1482801">
    <property type="pathway name" value="Acyl chain remodelling of PS"/>
</dbReference>
<dbReference type="Reactome" id="R-SPO-192105">
    <property type="pathway name" value="Synthesis of bile acids and bile salts"/>
</dbReference>
<dbReference type="PRO" id="PR:O94512"/>
<dbReference type="Proteomes" id="UP000002485">
    <property type="component" value="Chromosome II"/>
</dbReference>
<dbReference type="GO" id="GO:0005829">
    <property type="term" value="C:cytosol"/>
    <property type="evidence" value="ECO:0000318"/>
    <property type="project" value="GO_Central"/>
</dbReference>
<dbReference type="GO" id="GO:0005783">
    <property type="term" value="C:endoplasmic reticulum"/>
    <property type="evidence" value="ECO:0007005"/>
    <property type="project" value="PomBase"/>
</dbReference>
<dbReference type="GO" id="GO:0016020">
    <property type="term" value="C:membrane"/>
    <property type="evidence" value="ECO:0000318"/>
    <property type="project" value="GO_Central"/>
</dbReference>
<dbReference type="GO" id="GO:0008142">
    <property type="term" value="F:oxysterol binding"/>
    <property type="evidence" value="ECO:0000266"/>
    <property type="project" value="PomBase"/>
</dbReference>
<dbReference type="GO" id="GO:0032934">
    <property type="term" value="F:sterol binding"/>
    <property type="evidence" value="ECO:0000318"/>
    <property type="project" value="GO_Central"/>
</dbReference>
<dbReference type="GO" id="GO:0120015">
    <property type="term" value="F:sterol transfer activity"/>
    <property type="evidence" value="ECO:0000266"/>
    <property type="project" value="PomBase"/>
</dbReference>
<dbReference type="GO" id="GO:0120009">
    <property type="term" value="P:intermembrane lipid transfer"/>
    <property type="evidence" value="ECO:0000305"/>
    <property type="project" value="PomBase"/>
</dbReference>
<dbReference type="GO" id="GO:0006629">
    <property type="term" value="P:lipid metabolic process"/>
    <property type="evidence" value="ECO:0000303"/>
    <property type="project" value="PomBase"/>
</dbReference>
<dbReference type="GO" id="GO:0015918">
    <property type="term" value="P:sterol transport"/>
    <property type="evidence" value="ECO:0000266"/>
    <property type="project" value="PomBase"/>
</dbReference>
<dbReference type="FunFam" id="2.40.160.120:FF:000016">
    <property type="entry name" value="Oxysterol binding protein (Orp8), putative"/>
    <property type="match status" value="1"/>
</dbReference>
<dbReference type="FunFam" id="3.30.70.3490:FF:000007">
    <property type="entry name" value="Oxysterol-binding protein-related protein 4B"/>
    <property type="match status" value="1"/>
</dbReference>
<dbReference type="Gene3D" id="2.40.160.120">
    <property type="match status" value="1"/>
</dbReference>
<dbReference type="Gene3D" id="3.30.70.3490">
    <property type="match status" value="1"/>
</dbReference>
<dbReference type="InterPro" id="IPR037239">
    <property type="entry name" value="OSBP_sf"/>
</dbReference>
<dbReference type="InterPro" id="IPR000648">
    <property type="entry name" value="Oxysterol-bd"/>
</dbReference>
<dbReference type="PANTHER" id="PTHR10972:SF212">
    <property type="entry name" value="OXYSTEROL-BINDING PROTEIN-LIKE PROTEIN 1"/>
    <property type="match status" value="1"/>
</dbReference>
<dbReference type="PANTHER" id="PTHR10972">
    <property type="entry name" value="OXYSTEROL-BINDING PROTEIN-RELATED"/>
    <property type="match status" value="1"/>
</dbReference>
<dbReference type="Pfam" id="PF01237">
    <property type="entry name" value="Oxysterol_BP"/>
    <property type="match status" value="2"/>
</dbReference>
<dbReference type="SUPFAM" id="SSF144000">
    <property type="entry name" value="Oxysterol-binding protein-like"/>
    <property type="match status" value="1"/>
</dbReference>
<protein>
    <recommendedName>
        <fullName>Oxysterol-binding protein-like protein 1</fullName>
    </recommendedName>
</protein>
<keyword id="KW-0256">Endoplasmic reticulum</keyword>
<keyword id="KW-0597">Phosphoprotein</keyword>
<keyword id="KW-1185">Reference proteome</keyword>
<feature type="chain" id="PRO_0000315946" description="Oxysterol-binding protein-like protein 1">
    <location>
        <begin position="1"/>
        <end position="516"/>
    </location>
</feature>
<feature type="region of interest" description="Disordered" evidence="1">
    <location>
        <begin position="168"/>
        <end position="240"/>
    </location>
</feature>
<feature type="region of interest" description="Disordered" evidence="1">
    <location>
        <begin position="459"/>
        <end position="501"/>
    </location>
</feature>
<feature type="compositionally biased region" description="Polar residues" evidence="1">
    <location>
        <begin position="178"/>
        <end position="187"/>
    </location>
</feature>
<feature type="compositionally biased region" description="Basic residues" evidence="1">
    <location>
        <begin position="197"/>
        <end position="206"/>
    </location>
</feature>
<feature type="compositionally biased region" description="Polar residues" evidence="1">
    <location>
        <begin position="218"/>
        <end position="238"/>
    </location>
</feature>
<feature type="modified residue" description="Phosphoserine" evidence="3">
    <location>
        <position position="182"/>
    </location>
</feature>
<sequence length="516" mass="58692">MPNPNQAIKKENEPIQVENPTELVRDDGEVEGYQKEEGKFKLVLSILKQCIGVKDIASLRFSLPAQLLEPVGNLEYWNYVDRPDYFAVMGDSDDELERMLGVLRWWFTKDLRFVRGRVVKPYNSVLGEFFRCKWVVTDPTVREDHTLDPDSSQLPTYKTEYSETTKFPLGKSYRPKASRTTSSQSVASTMTKSSTKTSKKKSSKKNSKSESNQDSSNDRSSTAPSTAESNNEHLSSSQKSKHSIVFMAEQTSHHPAVSAFYVTCPSKGIEVYGQDQIAVGFTGTSFKVCAGDLNKGVYVRFNKRDNEEYLCTHPSASVGGILRGNLHINLLDSTVILCPKTRIKTIITYIEERWLGKPRSLVEGVCYRYDPSNDTIDSIKAVPKENILATFKGNWRNCIFYSYAGESESRMLVDLNELDLVHKRCPPLDKQFPFESRKIWFPVTHNILAKHYTQATKAKQEIEDQQRQASAAREESHTEWKPRFFVPDEKEGRPTLTEEGKKVLEQSLSDEYIHGS</sequence>
<reference key="1">
    <citation type="journal article" date="2002" name="Nature">
        <title>The genome sequence of Schizosaccharomyces pombe.</title>
        <authorList>
            <person name="Wood V."/>
            <person name="Gwilliam R."/>
            <person name="Rajandream M.A."/>
            <person name="Lyne M.H."/>
            <person name="Lyne R."/>
            <person name="Stewart A."/>
            <person name="Sgouros J.G."/>
            <person name="Peat N."/>
            <person name="Hayles J."/>
            <person name="Baker S.G."/>
            <person name="Basham D."/>
            <person name="Bowman S."/>
            <person name="Brooks K."/>
            <person name="Brown D."/>
            <person name="Brown S."/>
            <person name="Chillingworth T."/>
            <person name="Churcher C.M."/>
            <person name="Collins M."/>
            <person name="Connor R."/>
            <person name="Cronin A."/>
            <person name="Davis P."/>
            <person name="Feltwell T."/>
            <person name="Fraser A."/>
            <person name="Gentles S."/>
            <person name="Goble A."/>
            <person name="Hamlin N."/>
            <person name="Harris D.E."/>
            <person name="Hidalgo J."/>
            <person name="Hodgson G."/>
            <person name="Holroyd S."/>
            <person name="Hornsby T."/>
            <person name="Howarth S."/>
            <person name="Huckle E.J."/>
            <person name="Hunt S."/>
            <person name="Jagels K."/>
            <person name="James K.D."/>
            <person name="Jones L."/>
            <person name="Jones M."/>
            <person name="Leather S."/>
            <person name="McDonald S."/>
            <person name="McLean J."/>
            <person name="Mooney P."/>
            <person name="Moule S."/>
            <person name="Mungall K.L."/>
            <person name="Murphy L.D."/>
            <person name="Niblett D."/>
            <person name="Odell C."/>
            <person name="Oliver K."/>
            <person name="O'Neil S."/>
            <person name="Pearson D."/>
            <person name="Quail M.A."/>
            <person name="Rabbinowitsch E."/>
            <person name="Rutherford K.M."/>
            <person name="Rutter S."/>
            <person name="Saunders D."/>
            <person name="Seeger K."/>
            <person name="Sharp S."/>
            <person name="Skelton J."/>
            <person name="Simmonds M.N."/>
            <person name="Squares R."/>
            <person name="Squares S."/>
            <person name="Stevens K."/>
            <person name="Taylor K."/>
            <person name="Taylor R.G."/>
            <person name="Tivey A."/>
            <person name="Walsh S.V."/>
            <person name="Warren T."/>
            <person name="Whitehead S."/>
            <person name="Woodward J.R."/>
            <person name="Volckaert G."/>
            <person name="Aert R."/>
            <person name="Robben J."/>
            <person name="Grymonprez B."/>
            <person name="Weltjens I."/>
            <person name="Vanstreels E."/>
            <person name="Rieger M."/>
            <person name="Schaefer M."/>
            <person name="Mueller-Auer S."/>
            <person name="Gabel C."/>
            <person name="Fuchs M."/>
            <person name="Duesterhoeft A."/>
            <person name="Fritzc C."/>
            <person name="Holzer E."/>
            <person name="Moestl D."/>
            <person name="Hilbert H."/>
            <person name="Borzym K."/>
            <person name="Langer I."/>
            <person name="Beck A."/>
            <person name="Lehrach H."/>
            <person name="Reinhardt R."/>
            <person name="Pohl T.M."/>
            <person name="Eger P."/>
            <person name="Zimmermann W."/>
            <person name="Wedler H."/>
            <person name="Wambutt R."/>
            <person name="Purnelle B."/>
            <person name="Goffeau A."/>
            <person name="Cadieu E."/>
            <person name="Dreano S."/>
            <person name="Gloux S."/>
            <person name="Lelaure V."/>
            <person name="Mottier S."/>
            <person name="Galibert F."/>
            <person name="Aves S.J."/>
            <person name="Xiang Z."/>
            <person name="Hunt C."/>
            <person name="Moore K."/>
            <person name="Hurst S.M."/>
            <person name="Lucas M."/>
            <person name="Rochet M."/>
            <person name="Gaillardin C."/>
            <person name="Tallada V.A."/>
            <person name="Garzon A."/>
            <person name="Thode G."/>
            <person name="Daga R.R."/>
            <person name="Cruzado L."/>
            <person name="Jimenez J."/>
            <person name="Sanchez M."/>
            <person name="del Rey F."/>
            <person name="Benito J."/>
            <person name="Dominguez A."/>
            <person name="Revuelta J.L."/>
            <person name="Moreno S."/>
            <person name="Armstrong J."/>
            <person name="Forsburg S.L."/>
            <person name="Cerutti L."/>
            <person name="Lowe T."/>
            <person name="McCombie W.R."/>
            <person name="Paulsen I."/>
            <person name="Potashkin J."/>
            <person name="Shpakovski G.V."/>
            <person name="Ussery D."/>
            <person name="Barrell B.G."/>
            <person name="Nurse P."/>
        </authorList>
    </citation>
    <scope>NUCLEOTIDE SEQUENCE [LARGE SCALE GENOMIC DNA]</scope>
    <source>
        <strain>972 / ATCC 24843</strain>
    </source>
</reference>
<reference key="2">
    <citation type="journal article" date="2006" name="Nat. Biotechnol.">
        <title>ORFeome cloning and global analysis of protein localization in the fission yeast Schizosaccharomyces pombe.</title>
        <authorList>
            <person name="Matsuyama A."/>
            <person name="Arai R."/>
            <person name="Yashiroda Y."/>
            <person name="Shirai A."/>
            <person name="Kamata A."/>
            <person name="Sekido S."/>
            <person name="Kobayashi Y."/>
            <person name="Hashimoto A."/>
            <person name="Hamamoto M."/>
            <person name="Hiraoka Y."/>
            <person name="Horinouchi S."/>
            <person name="Yoshida M."/>
        </authorList>
    </citation>
    <scope>SUBCELLULAR LOCATION [LARGE SCALE ANALYSIS]</scope>
</reference>
<reference key="3">
    <citation type="journal article" date="2008" name="J. Proteome Res.">
        <title>Phosphoproteome analysis of fission yeast.</title>
        <authorList>
            <person name="Wilson-Grady J.T."/>
            <person name="Villen J."/>
            <person name="Gygi S.P."/>
        </authorList>
    </citation>
    <scope>PHOSPHORYLATION [LARGE SCALE ANALYSIS] AT SER-182</scope>
    <scope>IDENTIFICATION BY MASS SPECTROMETRY</scope>
</reference>